<comment type="function">
    <text evidence="1">One of the primary rRNA binding proteins, it binds directly to 16S rRNA where it nucleates assembly of the head domain of the 30S subunit. Is located at the subunit interface close to the decoding center, probably blocks exit of the E-site tRNA.</text>
</comment>
<comment type="subunit">
    <text evidence="1">Part of the 30S ribosomal subunit. Contacts proteins S9 and S11.</text>
</comment>
<comment type="similarity">
    <text evidence="1">Belongs to the universal ribosomal protein uS7 family.</text>
</comment>
<organism>
    <name type="scientific">Borrelia hermsii (strain HS1 / DAH)</name>
    <dbReference type="NCBI Taxonomy" id="314723"/>
    <lineage>
        <taxon>Bacteria</taxon>
        <taxon>Pseudomonadati</taxon>
        <taxon>Spirochaetota</taxon>
        <taxon>Spirochaetia</taxon>
        <taxon>Spirochaetales</taxon>
        <taxon>Borreliaceae</taxon>
        <taxon>Borrelia</taxon>
    </lineage>
</organism>
<gene>
    <name evidence="1" type="primary">rpsG</name>
    <name type="ordered locus">BH0386</name>
</gene>
<proteinExistence type="inferred from homology"/>
<protein>
    <recommendedName>
        <fullName evidence="1">Small ribosomal subunit protein uS7</fullName>
    </recommendedName>
    <alternativeName>
        <fullName evidence="2">30S ribosomal protein S7</fullName>
    </alternativeName>
</protein>
<reference key="1">
    <citation type="submission" date="2004-12" db="EMBL/GenBank/DDBJ databases">
        <title>The genome sequence of Borrelia hermsii and Borrelia turicatae: comparative analysis of two agents of endemic N. America relapsing fever.</title>
        <authorList>
            <person name="Porcella S.F."/>
            <person name="Raffel S.J."/>
            <person name="Schrumpf M.E."/>
            <person name="Montgomery B."/>
            <person name="Smith T."/>
            <person name="Schwan T.G."/>
        </authorList>
    </citation>
    <scope>NUCLEOTIDE SEQUENCE [LARGE SCALE GENOMIC DNA]</scope>
    <source>
        <strain>HS1 / DAH</strain>
    </source>
</reference>
<sequence>MSRKSKKIKKKVFKDSKYNSQVIAKFVNRMMFDGKKSISETIVYNSIDMLAEKIEEVDKIAAFNKALDNVKPLVEVRSRRVGGATYQVPVEVREERREALAMKWIISAARKASGKSMQEKLANEFVNSYNSTGAAFKKREDTHRMAEANRAFTHYRW</sequence>
<dbReference type="EMBL" id="CP000048">
    <property type="protein sequence ID" value="AAX16895.1"/>
    <property type="molecule type" value="Genomic_DNA"/>
</dbReference>
<dbReference type="RefSeq" id="WP_012422152.1">
    <property type="nucleotide sequence ID" value="NZ_CP073136.1"/>
</dbReference>
<dbReference type="SMR" id="B2S089"/>
<dbReference type="GeneID" id="71843192"/>
<dbReference type="KEGG" id="bhr:BH0386"/>
<dbReference type="HOGENOM" id="CLU_072226_1_1_12"/>
<dbReference type="Proteomes" id="UP000008834">
    <property type="component" value="Chromosome"/>
</dbReference>
<dbReference type="GO" id="GO:0015935">
    <property type="term" value="C:small ribosomal subunit"/>
    <property type="evidence" value="ECO:0007669"/>
    <property type="project" value="InterPro"/>
</dbReference>
<dbReference type="GO" id="GO:0019843">
    <property type="term" value="F:rRNA binding"/>
    <property type="evidence" value="ECO:0007669"/>
    <property type="project" value="UniProtKB-UniRule"/>
</dbReference>
<dbReference type="GO" id="GO:0003735">
    <property type="term" value="F:structural constituent of ribosome"/>
    <property type="evidence" value="ECO:0007669"/>
    <property type="project" value="InterPro"/>
</dbReference>
<dbReference type="GO" id="GO:0000049">
    <property type="term" value="F:tRNA binding"/>
    <property type="evidence" value="ECO:0007669"/>
    <property type="project" value="UniProtKB-UniRule"/>
</dbReference>
<dbReference type="GO" id="GO:0006412">
    <property type="term" value="P:translation"/>
    <property type="evidence" value="ECO:0007669"/>
    <property type="project" value="UniProtKB-UniRule"/>
</dbReference>
<dbReference type="CDD" id="cd14869">
    <property type="entry name" value="uS7_Bacteria"/>
    <property type="match status" value="1"/>
</dbReference>
<dbReference type="FunFam" id="1.10.455.10:FF:000001">
    <property type="entry name" value="30S ribosomal protein S7"/>
    <property type="match status" value="1"/>
</dbReference>
<dbReference type="Gene3D" id="1.10.455.10">
    <property type="entry name" value="Ribosomal protein S7 domain"/>
    <property type="match status" value="1"/>
</dbReference>
<dbReference type="HAMAP" id="MF_00480_B">
    <property type="entry name" value="Ribosomal_uS7_B"/>
    <property type="match status" value="1"/>
</dbReference>
<dbReference type="InterPro" id="IPR000235">
    <property type="entry name" value="Ribosomal_uS7"/>
</dbReference>
<dbReference type="InterPro" id="IPR005717">
    <property type="entry name" value="Ribosomal_uS7_bac/org-type"/>
</dbReference>
<dbReference type="InterPro" id="IPR020606">
    <property type="entry name" value="Ribosomal_uS7_CS"/>
</dbReference>
<dbReference type="InterPro" id="IPR023798">
    <property type="entry name" value="Ribosomal_uS7_dom"/>
</dbReference>
<dbReference type="InterPro" id="IPR036823">
    <property type="entry name" value="Ribosomal_uS7_dom_sf"/>
</dbReference>
<dbReference type="NCBIfam" id="TIGR01029">
    <property type="entry name" value="rpsG_bact"/>
    <property type="match status" value="1"/>
</dbReference>
<dbReference type="PANTHER" id="PTHR11205">
    <property type="entry name" value="RIBOSOMAL PROTEIN S7"/>
    <property type="match status" value="1"/>
</dbReference>
<dbReference type="Pfam" id="PF00177">
    <property type="entry name" value="Ribosomal_S7"/>
    <property type="match status" value="1"/>
</dbReference>
<dbReference type="PIRSF" id="PIRSF002122">
    <property type="entry name" value="RPS7p_RPS7a_RPS5e_RPS7o"/>
    <property type="match status" value="1"/>
</dbReference>
<dbReference type="SUPFAM" id="SSF47973">
    <property type="entry name" value="Ribosomal protein S7"/>
    <property type="match status" value="1"/>
</dbReference>
<dbReference type="PROSITE" id="PS00052">
    <property type="entry name" value="RIBOSOMAL_S7"/>
    <property type="match status" value="1"/>
</dbReference>
<evidence type="ECO:0000255" key="1">
    <source>
        <dbReference type="HAMAP-Rule" id="MF_00480"/>
    </source>
</evidence>
<evidence type="ECO:0000305" key="2"/>
<feature type="chain" id="PRO_1000125901" description="Small ribosomal subunit protein uS7">
    <location>
        <begin position="1"/>
        <end position="157"/>
    </location>
</feature>
<name>RS7_BORHD</name>
<keyword id="KW-0687">Ribonucleoprotein</keyword>
<keyword id="KW-0689">Ribosomal protein</keyword>
<keyword id="KW-0694">RNA-binding</keyword>
<keyword id="KW-0699">rRNA-binding</keyword>
<keyword id="KW-0820">tRNA-binding</keyword>
<accession>B2S089</accession>